<name>AMPA_VEREI</name>
<feature type="chain" id="PRO_1000192727" description="Probable cytosol aminopeptidase">
    <location>
        <begin position="1"/>
        <end position="519"/>
    </location>
</feature>
<feature type="region of interest" description="Disordered" evidence="2">
    <location>
        <begin position="487"/>
        <end position="519"/>
    </location>
</feature>
<feature type="compositionally biased region" description="Low complexity" evidence="2">
    <location>
        <begin position="487"/>
        <end position="502"/>
    </location>
</feature>
<feature type="active site" evidence="1">
    <location>
        <position position="263"/>
    </location>
</feature>
<feature type="active site" evidence="1">
    <location>
        <position position="337"/>
    </location>
</feature>
<feature type="binding site" evidence="1">
    <location>
        <position position="251"/>
    </location>
    <ligand>
        <name>Mn(2+)</name>
        <dbReference type="ChEBI" id="CHEBI:29035"/>
        <label>2</label>
    </ligand>
</feature>
<feature type="binding site" evidence="1">
    <location>
        <position position="256"/>
    </location>
    <ligand>
        <name>Mn(2+)</name>
        <dbReference type="ChEBI" id="CHEBI:29035"/>
        <label>1</label>
    </ligand>
</feature>
<feature type="binding site" evidence="1">
    <location>
        <position position="256"/>
    </location>
    <ligand>
        <name>Mn(2+)</name>
        <dbReference type="ChEBI" id="CHEBI:29035"/>
        <label>2</label>
    </ligand>
</feature>
<feature type="binding site" evidence="1">
    <location>
        <position position="274"/>
    </location>
    <ligand>
        <name>Mn(2+)</name>
        <dbReference type="ChEBI" id="CHEBI:29035"/>
        <label>2</label>
    </ligand>
</feature>
<feature type="binding site" evidence="1">
    <location>
        <position position="333"/>
    </location>
    <ligand>
        <name>Mn(2+)</name>
        <dbReference type="ChEBI" id="CHEBI:29035"/>
        <label>1</label>
    </ligand>
</feature>
<feature type="binding site" evidence="1">
    <location>
        <position position="335"/>
    </location>
    <ligand>
        <name>Mn(2+)</name>
        <dbReference type="ChEBI" id="CHEBI:29035"/>
        <label>1</label>
    </ligand>
</feature>
<feature type="binding site" evidence="1">
    <location>
        <position position="335"/>
    </location>
    <ligand>
        <name>Mn(2+)</name>
        <dbReference type="ChEBI" id="CHEBI:29035"/>
        <label>2</label>
    </ligand>
</feature>
<gene>
    <name evidence="1" type="primary">pepA</name>
    <name type="ordered locus">Veis_4922</name>
</gene>
<dbReference type="EC" id="3.4.11.1" evidence="1"/>
<dbReference type="EC" id="3.4.11.10" evidence="1"/>
<dbReference type="EMBL" id="CP000542">
    <property type="protein sequence ID" value="ABM60610.1"/>
    <property type="molecule type" value="Genomic_DNA"/>
</dbReference>
<dbReference type="RefSeq" id="WP_011812588.1">
    <property type="nucleotide sequence ID" value="NC_008786.1"/>
</dbReference>
<dbReference type="SMR" id="A1WSK3"/>
<dbReference type="STRING" id="391735.Veis_4922"/>
<dbReference type="MEROPS" id="M17.003"/>
<dbReference type="GeneID" id="76463181"/>
<dbReference type="KEGG" id="vei:Veis_4922"/>
<dbReference type="eggNOG" id="COG0260">
    <property type="taxonomic scope" value="Bacteria"/>
</dbReference>
<dbReference type="HOGENOM" id="CLU_013734_2_2_4"/>
<dbReference type="OrthoDB" id="9809354at2"/>
<dbReference type="Proteomes" id="UP000000374">
    <property type="component" value="Chromosome"/>
</dbReference>
<dbReference type="GO" id="GO:0005737">
    <property type="term" value="C:cytoplasm"/>
    <property type="evidence" value="ECO:0007669"/>
    <property type="project" value="UniProtKB-SubCell"/>
</dbReference>
<dbReference type="GO" id="GO:0030145">
    <property type="term" value="F:manganese ion binding"/>
    <property type="evidence" value="ECO:0007669"/>
    <property type="project" value="UniProtKB-UniRule"/>
</dbReference>
<dbReference type="GO" id="GO:0070006">
    <property type="term" value="F:metalloaminopeptidase activity"/>
    <property type="evidence" value="ECO:0007669"/>
    <property type="project" value="InterPro"/>
</dbReference>
<dbReference type="GO" id="GO:0006508">
    <property type="term" value="P:proteolysis"/>
    <property type="evidence" value="ECO:0007669"/>
    <property type="project" value="UniProtKB-KW"/>
</dbReference>
<dbReference type="CDD" id="cd00433">
    <property type="entry name" value="Peptidase_M17"/>
    <property type="match status" value="1"/>
</dbReference>
<dbReference type="Gene3D" id="3.40.220.10">
    <property type="entry name" value="Leucine Aminopeptidase, subunit E, domain 1"/>
    <property type="match status" value="1"/>
</dbReference>
<dbReference type="Gene3D" id="3.40.630.10">
    <property type="entry name" value="Zn peptidases"/>
    <property type="match status" value="1"/>
</dbReference>
<dbReference type="HAMAP" id="MF_00181">
    <property type="entry name" value="Cytosol_peptidase_M17"/>
    <property type="match status" value="1"/>
</dbReference>
<dbReference type="InterPro" id="IPR011356">
    <property type="entry name" value="Leucine_aapep/pepB"/>
</dbReference>
<dbReference type="InterPro" id="IPR043472">
    <property type="entry name" value="Macro_dom-like"/>
</dbReference>
<dbReference type="InterPro" id="IPR000819">
    <property type="entry name" value="Peptidase_M17_C"/>
</dbReference>
<dbReference type="InterPro" id="IPR023042">
    <property type="entry name" value="Peptidase_M17_leu_NH2_pept"/>
</dbReference>
<dbReference type="InterPro" id="IPR008283">
    <property type="entry name" value="Peptidase_M17_N"/>
</dbReference>
<dbReference type="NCBIfam" id="NF002074">
    <property type="entry name" value="PRK00913.1-4"/>
    <property type="match status" value="1"/>
</dbReference>
<dbReference type="PANTHER" id="PTHR11963:SF23">
    <property type="entry name" value="CYTOSOL AMINOPEPTIDASE"/>
    <property type="match status" value="1"/>
</dbReference>
<dbReference type="PANTHER" id="PTHR11963">
    <property type="entry name" value="LEUCINE AMINOPEPTIDASE-RELATED"/>
    <property type="match status" value="1"/>
</dbReference>
<dbReference type="Pfam" id="PF00883">
    <property type="entry name" value="Peptidase_M17"/>
    <property type="match status" value="1"/>
</dbReference>
<dbReference type="Pfam" id="PF02789">
    <property type="entry name" value="Peptidase_M17_N"/>
    <property type="match status" value="1"/>
</dbReference>
<dbReference type="PRINTS" id="PR00481">
    <property type="entry name" value="LAMNOPPTDASE"/>
</dbReference>
<dbReference type="SUPFAM" id="SSF52949">
    <property type="entry name" value="Macro domain-like"/>
    <property type="match status" value="1"/>
</dbReference>
<dbReference type="SUPFAM" id="SSF53187">
    <property type="entry name" value="Zn-dependent exopeptidases"/>
    <property type="match status" value="1"/>
</dbReference>
<dbReference type="PROSITE" id="PS00631">
    <property type="entry name" value="CYTOSOL_AP"/>
    <property type="match status" value="1"/>
</dbReference>
<protein>
    <recommendedName>
        <fullName evidence="1">Probable cytosol aminopeptidase</fullName>
        <ecNumber evidence="1">3.4.11.1</ecNumber>
    </recommendedName>
    <alternativeName>
        <fullName evidence="1">Leucine aminopeptidase</fullName>
        <shortName evidence="1">LAP</shortName>
        <ecNumber evidence="1">3.4.11.10</ecNumber>
    </alternativeName>
    <alternativeName>
        <fullName evidence="1">Leucyl aminopeptidase</fullName>
    </alternativeName>
</protein>
<organism>
    <name type="scientific">Verminephrobacter eiseniae (strain EF01-2)</name>
    <dbReference type="NCBI Taxonomy" id="391735"/>
    <lineage>
        <taxon>Bacteria</taxon>
        <taxon>Pseudomonadati</taxon>
        <taxon>Pseudomonadota</taxon>
        <taxon>Betaproteobacteria</taxon>
        <taxon>Burkholderiales</taxon>
        <taxon>Comamonadaceae</taxon>
        <taxon>Verminephrobacter</taxon>
    </lineage>
</organism>
<comment type="function">
    <text evidence="1">Presumably involved in the processing and regular turnover of intracellular proteins. Catalyzes the removal of unsubstituted N-terminal amino acids from various peptides.</text>
</comment>
<comment type="catalytic activity">
    <reaction evidence="1">
        <text>Release of an N-terminal amino acid, Xaa-|-Yaa-, in which Xaa is preferably Leu, but may be other amino acids including Pro although not Arg or Lys, and Yaa may be Pro. Amino acid amides and methyl esters are also readily hydrolyzed, but rates on arylamides are exceedingly low.</text>
        <dbReference type="EC" id="3.4.11.1"/>
    </reaction>
</comment>
<comment type="catalytic activity">
    <reaction evidence="1">
        <text>Release of an N-terminal amino acid, preferentially leucine, but not glutamic or aspartic acids.</text>
        <dbReference type="EC" id="3.4.11.10"/>
    </reaction>
</comment>
<comment type="cofactor">
    <cofactor evidence="1">
        <name>Mn(2+)</name>
        <dbReference type="ChEBI" id="CHEBI:29035"/>
    </cofactor>
    <text evidence="1">Binds 2 manganese ions per subunit.</text>
</comment>
<comment type="subcellular location">
    <subcellularLocation>
        <location evidence="1">Cytoplasm</location>
    </subcellularLocation>
</comment>
<comment type="similarity">
    <text evidence="1">Belongs to the peptidase M17 family.</text>
</comment>
<keyword id="KW-0031">Aminopeptidase</keyword>
<keyword id="KW-0963">Cytoplasm</keyword>
<keyword id="KW-0378">Hydrolase</keyword>
<keyword id="KW-0464">Manganese</keyword>
<keyword id="KW-0479">Metal-binding</keyword>
<keyword id="KW-0645">Protease</keyword>
<keyword id="KW-1185">Reference proteome</keyword>
<evidence type="ECO:0000255" key="1">
    <source>
        <dbReference type="HAMAP-Rule" id="MF_00181"/>
    </source>
</evidence>
<evidence type="ECO:0000256" key="2">
    <source>
        <dbReference type="SAM" id="MobiDB-lite"/>
    </source>
</evidence>
<accession>A1WSK3</accession>
<sequence length="519" mass="53675">MNFDLKTLELAAAAAEKCDLLLVLIPEGFTPGQDALSTLAALALKNGDLLLKAGKHLQLYQVPAVAARRVILLGVGDGTARAVRQALLALGAEIKKPQTKRLVLCFAAALKAGVASAAVQAVAEASYVYTTTKSKAEARSLSRCVLGVPDAAGARPGFDCGVALVAGVEFAREWSNRPANHATPSLLADAAKTLGRLPHIQCKVHGPAQVRRLGMGAFVAVARGSEQPLRFIELRYSAAAKDQAPIVLVGKGITFDSGGISIKPAPEMDEMKFDMCGAASVLGVFRALGELQPAINVLGLIPACENLPDGRAIKPGDVVTSMSGQTIEILNTDAEGRLILCDALTYAARFKPAAVIDIATLTGACVVALAGVRSGLFANDDDLAVSLYEAGEAALDPCWRMPLDDDYADGLKSHFADMGNTAGRSGGAITAAKFLQKFVAGMRWAHLDIAGIAYKSGPAKGATGRPVGLLVHYLLAQAEAMAQQAPVAPAAPAAPAAPAARPAAKRTGRSQGGLKRTAP</sequence>
<reference key="1">
    <citation type="submission" date="2006-12" db="EMBL/GenBank/DDBJ databases">
        <title>Complete sequence of chromosome 1 of Verminephrobacter eiseniae EF01-2.</title>
        <authorList>
            <person name="Copeland A."/>
            <person name="Lucas S."/>
            <person name="Lapidus A."/>
            <person name="Barry K."/>
            <person name="Detter J.C."/>
            <person name="Glavina del Rio T."/>
            <person name="Dalin E."/>
            <person name="Tice H."/>
            <person name="Pitluck S."/>
            <person name="Chertkov O."/>
            <person name="Brettin T."/>
            <person name="Bruce D."/>
            <person name="Han C."/>
            <person name="Tapia R."/>
            <person name="Gilna P."/>
            <person name="Schmutz J."/>
            <person name="Larimer F."/>
            <person name="Land M."/>
            <person name="Hauser L."/>
            <person name="Kyrpides N."/>
            <person name="Kim E."/>
            <person name="Stahl D."/>
            <person name="Richardson P."/>
        </authorList>
    </citation>
    <scope>NUCLEOTIDE SEQUENCE [LARGE SCALE GENOMIC DNA]</scope>
    <source>
        <strain>EF01-2</strain>
    </source>
</reference>
<proteinExistence type="inferred from homology"/>